<evidence type="ECO:0000255" key="1"/>
<evidence type="ECO:0000255" key="2">
    <source>
        <dbReference type="PROSITE-ProRule" id="PRU00048"/>
    </source>
</evidence>
<evidence type="ECO:0000255" key="3">
    <source>
        <dbReference type="PROSITE-ProRule" id="PRU01118"/>
    </source>
</evidence>
<evidence type="ECO:0000256" key="4">
    <source>
        <dbReference type="SAM" id="MobiDB-lite"/>
    </source>
</evidence>
<sequence>MKKQFLEKAVFTVAATAATVVLGNKMADADTYTLQEGDSFFSVAQRYHMDAYELASMNGKDITSLILPGQTLTVNGSAAPDNQAAAPTDTTQATTETNDANANTYPVGQCTWGVKAVATWAGDWWGNGGDWASSASAQGYTVGNTPAVGSIMCWTDGGYGHVAYVTAVGEDGKVQVLESNYKDQQWVDNYRGWFDPNNSGTPGSVSYIYPN</sequence>
<reference key="1">
    <citation type="journal article" date="2002" name="Proc. Natl. Acad. Sci. U.S.A.">
        <title>Genome sequence of Streptococcus mutans UA159, a cariogenic dental pathogen.</title>
        <authorList>
            <person name="Ajdic D.J."/>
            <person name="McShan W.M."/>
            <person name="McLaughlin R.E."/>
            <person name="Savic G."/>
            <person name="Chang J."/>
            <person name="Carson M.B."/>
            <person name="Primeaux C."/>
            <person name="Tian R."/>
            <person name="Kenton S."/>
            <person name="Jia H.G."/>
            <person name="Lin S.P."/>
            <person name="Qian Y."/>
            <person name="Li S."/>
            <person name="Zhu H."/>
            <person name="Najar F.Z."/>
            <person name="Lai H."/>
            <person name="White J."/>
            <person name="Roe B.A."/>
            <person name="Ferretti J.J."/>
        </authorList>
    </citation>
    <scope>NUCLEOTIDE SEQUENCE [LARGE SCALE GENOMIC DNA]</scope>
    <source>
        <strain>ATCC 700610 / UA159</strain>
    </source>
</reference>
<reference key="2">
    <citation type="submission" date="2002-04" db="EMBL/GenBank/DDBJ databases">
        <title>Identification of a novel antigen I/II gene, pas, from Streptococcus mutans.</title>
        <authorList>
            <person name="Tamura H."/>
            <person name="Kato H."/>
        </authorList>
    </citation>
    <scope>NUCLEOTIDE SEQUENCE [GENOMIC DNA] OF 34-158</scope>
    <source>
        <strain>MT8148 / Serotype c</strain>
    </source>
</reference>
<feature type="signal peptide" evidence="1">
    <location>
        <begin position="1"/>
        <end position="29"/>
    </location>
</feature>
<feature type="chain" id="PRO_0000379123" description="Putative hydrolase SMU_367">
    <location>
        <begin position="30"/>
        <end position="211"/>
    </location>
</feature>
<feature type="domain" description="LysM" evidence="3">
    <location>
        <begin position="30"/>
        <end position="74"/>
    </location>
</feature>
<feature type="domain" description="Peptidase C51" evidence="2">
    <location>
        <begin position="85"/>
        <end position="209"/>
    </location>
</feature>
<feature type="region of interest" description="Disordered" evidence="4">
    <location>
        <begin position="77"/>
        <end position="101"/>
    </location>
</feature>
<feature type="compositionally biased region" description="Low complexity" evidence="4">
    <location>
        <begin position="78"/>
        <end position="101"/>
    </location>
</feature>
<feature type="sequence variant" description="In strain: MT8148 / Serotype c.">
    <original>T</original>
    <variation>A</variation>
    <location>
        <position position="88"/>
    </location>
</feature>
<accession>Q8DVU8</accession>
<accession>Q8RQM1</accession>
<organism>
    <name type="scientific">Streptococcus mutans serotype c (strain ATCC 700610 / UA159)</name>
    <dbReference type="NCBI Taxonomy" id="210007"/>
    <lineage>
        <taxon>Bacteria</taxon>
        <taxon>Bacillati</taxon>
        <taxon>Bacillota</taxon>
        <taxon>Bacilli</taxon>
        <taxon>Lactobacillales</taxon>
        <taxon>Streptococcaceae</taxon>
        <taxon>Streptococcus</taxon>
    </lineage>
</organism>
<protein>
    <recommendedName>
        <fullName>Putative hydrolase SMU_367</fullName>
        <ecNumber>3.-.-.-</ecNumber>
    </recommendedName>
</protein>
<proteinExistence type="inferred from homology"/>
<dbReference type="EC" id="3.-.-.-"/>
<dbReference type="EMBL" id="AE014133">
    <property type="protein sequence ID" value="AAN58125.1"/>
    <property type="molecule type" value="Genomic_DNA"/>
</dbReference>
<dbReference type="EMBL" id="AB083136">
    <property type="protein sequence ID" value="BAB88830.1"/>
    <property type="molecule type" value="Genomic_DNA"/>
</dbReference>
<dbReference type="RefSeq" id="NP_720819.1">
    <property type="nucleotide sequence ID" value="NC_004350.2"/>
</dbReference>
<dbReference type="RefSeq" id="WP_002264906.1">
    <property type="nucleotide sequence ID" value="NC_004350.2"/>
</dbReference>
<dbReference type="SMR" id="Q8DVU8"/>
<dbReference type="STRING" id="210007.SMU_367"/>
<dbReference type="KEGG" id="smu:SMU_367"/>
<dbReference type="PATRIC" id="fig|210007.7.peg.321"/>
<dbReference type="eggNOG" id="COG3942">
    <property type="taxonomic scope" value="Bacteria"/>
</dbReference>
<dbReference type="HOGENOM" id="CLU_092434_0_0_9"/>
<dbReference type="OrthoDB" id="2409959at2"/>
<dbReference type="PhylomeDB" id="Q8DVU8"/>
<dbReference type="Proteomes" id="UP000002512">
    <property type="component" value="Chromosome"/>
</dbReference>
<dbReference type="GO" id="GO:0016787">
    <property type="term" value="F:hydrolase activity"/>
    <property type="evidence" value="ECO:0007669"/>
    <property type="project" value="UniProtKB-KW"/>
</dbReference>
<dbReference type="CDD" id="cd00118">
    <property type="entry name" value="LysM"/>
    <property type="match status" value="1"/>
</dbReference>
<dbReference type="Gene3D" id="3.90.1720.10">
    <property type="entry name" value="endopeptidase domain like (from Nostoc punctiforme)"/>
    <property type="match status" value="1"/>
</dbReference>
<dbReference type="Gene3D" id="3.10.350.10">
    <property type="entry name" value="LysM domain"/>
    <property type="match status" value="1"/>
</dbReference>
<dbReference type="InterPro" id="IPR007921">
    <property type="entry name" value="CHAP_dom"/>
</dbReference>
<dbReference type="InterPro" id="IPR018392">
    <property type="entry name" value="LysM_dom"/>
</dbReference>
<dbReference type="InterPro" id="IPR036779">
    <property type="entry name" value="LysM_dom_sf"/>
</dbReference>
<dbReference type="InterPro" id="IPR038765">
    <property type="entry name" value="Papain-like_cys_pep_sf"/>
</dbReference>
<dbReference type="Pfam" id="PF05257">
    <property type="entry name" value="CHAP"/>
    <property type="match status" value="1"/>
</dbReference>
<dbReference type="Pfam" id="PF01476">
    <property type="entry name" value="LysM"/>
    <property type="match status" value="1"/>
</dbReference>
<dbReference type="SMART" id="SM00257">
    <property type="entry name" value="LysM"/>
    <property type="match status" value="1"/>
</dbReference>
<dbReference type="SUPFAM" id="SSF54001">
    <property type="entry name" value="Cysteine proteinases"/>
    <property type="match status" value="1"/>
</dbReference>
<dbReference type="SUPFAM" id="SSF54106">
    <property type="entry name" value="LysM domain"/>
    <property type="match status" value="1"/>
</dbReference>
<dbReference type="PROSITE" id="PS50911">
    <property type="entry name" value="CHAP"/>
    <property type="match status" value="1"/>
</dbReference>
<dbReference type="PROSITE" id="PS51782">
    <property type="entry name" value="LYSM"/>
    <property type="match status" value="1"/>
</dbReference>
<name>Y367_STRMU</name>
<keyword id="KW-0378">Hydrolase</keyword>
<keyword id="KW-1185">Reference proteome</keyword>
<keyword id="KW-0732">Signal</keyword>
<gene>
    <name type="ordered locus">SMU_367</name>
</gene>